<dbReference type="EMBL" id="AF281633">
    <property type="protein sequence ID" value="AAF86981.1"/>
    <property type="molecule type" value="mRNA"/>
</dbReference>
<dbReference type="SMR" id="Q9MYX7"/>
<dbReference type="FunCoup" id="Q9MYX7">
    <property type="interactions" value="109"/>
</dbReference>
<dbReference type="STRING" id="9823.ENSSSCP00000031088"/>
<dbReference type="GlyCosmos" id="Q9MYX7">
    <property type="glycosylation" value="2 sites, No reported glycans"/>
</dbReference>
<dbReference type="GlyGen" id="Q9MYX7">
    <property type="glycosylation" value="2 sites"/>
</dbReference>
<dbReference type="PaxDb" id="9823-ENSSSCP00000031088"/>
<dbReference type="eggNOG" id="ENOG502RZVK">
    <property type="taxonomic scope" value="Eukaryota"/>
</dbReference>
<dbReference type="InParanoid" id="Q9MYX7"/>
<dbReference type="Proteomes" id="UP000008227">
    <property type="component" value="Unplaced"/>
</dbReference>
<dbReference type="Proteomes" id="UP000314985">
    <property type="component" value="Unplaced"/>
</dbReference>
<dbReference type="Proteomes" id="UP000694570">
    <property type="component" value="Unplaced"/>
</dbReference>
<dbReference type="Proteomes" id="UP000694571">
    <property type="component" value="Unplaced"/>
</dbReference>
<dbReference type="Proteomes" id="UP000694720">
    <property type="component" value="Unplaced"/>
</dbReference>
<dbReference type="Proteomes" id="UP000694722">
    <property type="component" value="Unplaced"/>
</dbReference>
<dbReference type="Proteomes" id="UP000694723">
    <property type="component" value="Unplaced"/>
</dbReference>
<dbReference type="Proteomes" id="UP000694724">
    <property type="component" value="Unplaced"/>
</dbReference>
<dbReference type="Proteomes" id="UP000694725">
    <property type="component" value="Unplaced"/>
</dbReference>
<dbReference type="Proteomes" id="UP000694726">
    <property type="component" value="Unplaced"/>
</dbReference>
<dbReference type="Proteomes" id="UP000694727">
    <property type="component" value="Unplaced"/>
</dbReference>
<dbReference type="Proteomes" id="UP000694728">
    <property type="component" value="Unplaced"/>
</dbReference>
<dbReference type="GO" id="GO:0009897">
    <property type="term" value="C:external side of plasma membrane"/>
    <property type="evidence" value="ECO:0000318"/>
    <property type="project" value="GO_Central"/>
</dbReference>
<dbReference type="GO" id="GO:0005886">
    <property type="term" value="C:plasma membrane"/>
    <property type="evidence" value="ECO:0000250"/>
    <property type="project" value="UniProtKB"/>
</dbReference>
<dbReference type="GO" id="GO:0002250">
    <property type="term" value="P:adaptive immune response"/>
    <property type="evidence" value="ECO:0007669"/>
    <property type="project" value="UniProtKB-KW"/>
</dbReference>
<dbReference type="GO" id="GO:0050853">
    <property type="term" value="P:B cell receptor signaling pathway"/>
    <property type="evidence" value="ECO:0000318"/>
    <property type="project" value="GO_Central"/>
</dbReference>
<dbReference type="GO" id="GO:0045590">
    <property type="term" value="P:negative regulation of regulatory T cell differentiation"/>
    <property type="evidence" value="ECO:0000318"/>
    <property type="project" value="GO_Central"/>
</dbReference>
<dbReference type="GO" id="GO:0042129">
    <property type="term" value="P:regulation of T cell proliferation"/>
    <property type="evidence" value="ECO:0007669"/>
    <property type="project" value="InterPro"/>
</dbReference>
<dbReference type="GO" id="GO:0050852">
    <property type="term" value="P:T cell receptor signaling pathway"/>
    <property type="evidence" value="ECO:0000318"/>
    <property type="project" value="GO_Central"/>
</dbReference>
<dbReference type="FunFam" id="2.60.40.10:FF:000686">
    <property type="entry name" value="Cytotoxic T-lymphocyte protein 4"/>
    <property type="match status" value="1"/>
</dbReference>
<dbReference type="Gene3D" id="2.60.40.10">
    <property type="entry name" value="Immunoglobulins"/>
    <property type="match status" value="1"/>
</dbReference>
<dbReference type="InterPro" id="IPR008096">
    <property type="entry name" value="CTLA4"/>
</dbReference>
<dbReference type="InterPro" id="IPR040216">
    <property type="entry name" value="CTLA4/CD28"/>
</dbReference>
<dbReference type="InterPro" id="IPR036179">
    <property type="entry name" value="Ig-like_dom_sf"/>
</dbReference>
<dbReference type="InterPro" id="IPR013783">
    <property type="entry name" value="Ig-like_fold"/>
</dbReference>
<dbReference type="InterPro" id="IPR013106">
    <property type="entry name" value="Ig_V-set"/>
</dbReference>
<dbReference type="PANTHER" id="PTHR11494">
    <property type="entry name" value="CYTOTOXIC T-LYMPHOCYTE PROTEIN"/>
    <property type="match status" value="1"/>
</dbReference>
<dbReference type="PANTHER" id="PTHR11494:SF8">
    <property type="entry name" value="CYTOTOXIC T-LYMPHOCYTE PROTEIN 4"/>
    <property type="match status" value="1"/>
</dbReference>
<dbReference type="Pfam" id="PF07686">
    <property type="entry name" value="V-set"/>
    <property type="match status" value="1"/>
</dbReference>
<dbReference type="PRINTS" id="PR01720">
    <property type="entry name" value="CTLANTIGEN4"/>
</dbReference>
<dbReference type="SUPFAM" id="SSF48726">
    <property type="entry name" value="Immunoglobulin"/>
    <property type="match status" value="1"/>
</dbReference>
<proteinExistence type="evidence at transcript level"/>
<name>CTLA4_PIG</name>
<comment type="function">
    <text evidence="1">Inhibitory receptor acting as a major negative regulator of T-cell responses. The affinity of CTLA4 for its natural B7 family ligands, CD80 and CD86, is considerably stronger than the affinity of their cognate stimulatory coreceptor CD28.</text>
</comment>
<comment type="subunit">
    <text evidence="1">Homodimer; disulfide-linked. Binds to CD80/B7-1 and CD86/B7.2. Interacts with ICOSLG.</text>
</comment>
<comment type="subcellular location">
    <subcellularLocation>
        <location evidence="1">Cell membrane</location>
        <topology evidence="1">Single-pass type I membrane protein</topology>
    </subcellularLocation>
    <text evidence="1">Exists primarily an intracellular antigen whose surface expression is tightly regulated by restricted trafficking to the cell surface and rapid internalization.</text>
</comment>
<comment type="PTM">
    <text evidence="1">N-glycosylation is important for dimerization.</text>
</comment>
<comment type="PTM">
    <text evidence="1">Phosphorylation at Tyr-201 prevents binding to the AP-2 adapter complex, blocks endocytosis, and leads to retention of CTLA4 on the cell surface.</text>
</comment>
<sequence>MACSGFQSHGAWLELTSRTWPCTALFSLLFIPVFSKGMHVAQPAVVLANSRGVASFVCEYGSAGKAAEVRVTVLRRAGSQMTEVCAATYTVEDELTFLDDSTCTGTSTENKVNLTIQGLRAVDTGLYICKVELLYPPPYYVGMGNGTQIYVIDPEPCPDSDFLLWILAAVSSGLFFYSFLITAVSLSKMLKKRSPLTTGVYVKMPPTEPECEKQFQPYFIPIN</sequence>
<protein>
    <recommendedName>
        <fullName>Cytotoxic T-lymphocyte protein 4</fullName>
    </recommendedName>
    <alternativeName>
        <fullName>Cytotoxic T-lymphocyte-associated antigen 4</fullName>
        <shortName>CTLA-4</shortName>
    </alternativeName>
    <cdAntigenName>CD152</cdAntigenName>
</protein>
<keyword id="KW-1064">Adaptive immunity</keyword>
<keyword id="KW-1003">Cell membrane</keyword>
<keyword id="KW-1015">Disulfide bond</keyword>
<keyword id="KW-0325">Glycoprotein</keyword>
<keyword id="KW-0391">Immunity</keyword>
<keyword id="KW-0393">Immunoglobulin domain</keyword>
<keyword id="KW-0472">Membrane</keyword>
<keyword id="KW-0597">Phosphoprotein</keyword>
<keyword id="KW-1185">Reference proteome</keyword>
<keyword id="KW-0732">Signal</keyword>
<keyword id="KW-0812">Transmembrane</keyword>
<keyword id="KW-1133">Transmembrane helix</keyword>
<feature type="signal peptide" evidence="2">
    <location>
        <begin position="1"/>
        <end position="35"/>
    </location>
</feature>
<feature type="chain" id="PRO_0000014736" description="Cytotoxic T-lymphocyte protein 4">
    <location>
        <begin position="36"/>
        <end position="223"/>
    </location>
</feature>
<feature type="topological domain" description="Extracellular" evidence="2">
    <location>
        <begin position="38"/>
        <end position="161"/>
    </location>
</feature>
<feature type="transmembrane region" description="Helical" evidence="2">
    <location>
        <begin position="162"/>
        <end position="182"/>
    </location>
</feature>
<feature type="topological domain" description="Cytoplasmic" evidence="2">
    <location>
        <begin position="183"/>
        <end position="223"/>
    </location>
</feature>
<feature type="domain" description="Ig-like V-type">
    <location>
        <begin position="39"/>
        <end position="140"/>
    </location>
</feature>
<feature type="region of interest" description="Homodimerization" evidence="1">
    <location>
        <begin position="46"/>
        <end position="50"/>
    </location>
</feature>
<feature type="region of interest" description="Important for interaction with CD80 and CD86" evidence="1">
    <location>
        <begin position="134"/>
        <end position="139"/>
    </location>
</feature>
<feature type="region of interest" description="Homodimerization" evidence="1">
    <location>
        <begin position="150"/>
        <end position="155"/>
    </location>
</feature>
<feature type="modified residue" description="Phosphotyrosine; by TXK and JAK2" evidence="1">
    <location>
        <position position="201"/>
    </location>
</feature>
<feature type="glycosylation site" description="N-linked (GlcNAc...) asparagine" evidence="2">
    <location>
        <position position="113"/>
    </location>
</feature>
<feature type="glycosylation site" description="N-linked (GlcNAc...) asparagine" evidence="2">
    <location>
        <position position="145"/>
    </location>
</feature>
<feature type="disulfide bond" evidence="1">
    <location>
        <begin position="58"/>
        <end position="129"/>
    </location>
</feature>
<feature type="disulfide bond" evidence="1">
    <location>
        <begin position="85"/>
        <end position="103"/>
    </location>
</feature>
<feature type="disulfide bond" description="Interchain" evidence="1">
    <location>
        <position position="157"/>
    </location>
</feature>
<gene>
    <name type="primary">CTLA4</name>
</gene>
<reference key="1">
    <citation type="submission" date="2000-06" db="EMBL/GenBank/DDBJ databases">
        <title>Molecular characterization and phylogenetic analysis of porcine cytotoxic T-lymphocyte-associated antigen 4 (CTLA4).</title>
        <authorList>
            <person name="Tachedjian M."/>
            <person name="Chaplin P.J."/>
            <person name="Scheerlinck J.-P.Y."/>
            <person name="Tennent J.M."/>
        </authorList>
    </citation>
    <scope>NUCLEOTIDE SEQUENCE [MRNA]</scope>
</reference>
<evidence type="ECO:0000250" key="1">
    <source>
        <dbReference type="UniProtKB" id="P16410"/>
    </source>
</evidence>
<evidence type="ECO:0000255" key="2"/>
<accession>Q9MYX7</accession>
<organism>
    <name type="scientific">Sus scrofa</name>
    <name type="common">Pig</name>
    <dbReference type="NCBI Taxonomy" id="9823"/>
    <lineage>
        <taxon>Eukaryota</taxon>
        <taxon>Metazoa</taxon>
        <taxon>Chordata</taxon>
        <taxon>Craniata</taxon>
        <taxon>Vertebrata</taxon>
        <taxon>Euteleostomi</taxon>
        <taxon>Mammalia</taxon>
        <taxon>Eutheria</taxon>
        <taxon>Laurasiatheria</taxon>
        <taxon>Artiodactyla</taxon>
        <taxon>Suina</taxon>
        <taxon>Suidae</taxon>
        <taxon>Sus</taxon>
    </lineage>
</organism>